<accession>Q9N2G6</accession>
<comment type="function">
    <text>Hematopoietic growth factor capable of stimulating the proliferation of lymphoid progenitors. It is important for proliferation during certain stages of B-cell maturation.</text>
</comment>
<comment type="subcellular location">
    <subcellularLocation>
        <location>Secreted</location>
    </subcellularLocation>
</comment>
<comment type="similarity">
    <text evidence="3">Belongs to the IL-7/IL-9 family.</text>
</comment>
<sequence length="176" mass="20161">MFHVSFRYIFGIPPLILVLLPVASSDCDIEGKDGGVYQNVLMVSIDDLDRMIDFDSNCLNNEPNFLKKHSCDDNKEASFLYRAARKLKQFIKMNISEEFNHHLSTVSQGTLTLFNCTSKVKGRKPPSLGEAQLTKNLEENKSLKEQKRQGDLCFLKILLQKIKTCWNKILRGAKEY</sequence>
<feature type="signal peptide" evidence="2">
    <location>
        <begin position="1"/>
        <end position="25"/>
    </location>
</feature>
<feature type="chain" id="PRO_0000326172" description="Interleukin-7">
    <location>
        <begin position="26"/>
        <end position="176"/>
    </location>
</feature>
<feature type="glycosylation site" description="N-linked (GlcNAc...) asparagine" evidence="2">
    <location>
        <position position="94"/>
    </location>
</feature>
<feature type="glycosylation site" description="N-linked (GlcNAc...) asparagine" evidence="2">
    <location>
        <position position="115"/>
    </location>
</feature>
<feature type="glycosylation site" description="N-linked (GlcNAc...) asparagine" evidence="2">
    <location>
        <position position="140"/>
    </location>
</feature>
<feature type="disulfide bond" evidence="1">
    <location>
        <begin position="27"/>
        <end position="165"/>
    </location>
</feature>
<feature type="disulfide bond" evidence="1">
    <location>
        <begin position="58"/>
        <end position="153"/>
    </location>
</feature>
<feature type="disulfide bond" evidence="1">
    <location>
        <begin position="71"/>
        <end position="116"/>
    </location>
</feature>
<name>IL7_PIG</name>
<protein>
    <recommendedName>
        <fullName>Interleukin-7</fullName>
        <shortName>IL-7</shortName>
    </recommendedName>
</protein>
<organism>
    <name type="scientific">Sus scrofa</name>
    <name type="common">Pig</name>
    <dbReference type="NCBI Taxonomy" id="9823"/>
    <lineage>
        <taxon>Eukaryota</taxon>
        <taxon>Metazoa</taxon>
        <taxon>Chordata</taxon>
        <taxon>Craniata</taxon>
        <taxon>Vertebrata</taxon>
        <taxon>Euteleostomi</taxon>
        <taxon>Mammalia</taxon>
        <taxon>Eutheria</taxon>
        <taxon>Laurasiatheria</taxon>
        <taxon>Artiodactyla</taxon>
        <taxon>Suina</taxon>
        <taxon>Suidae</taxon>
        <taxon>Sus</taxon>
    </lineage>
</organism>
<evidence type="ECO:0000250" key="1"/>
<evidence type="ECO:0000255" key="2"/>
<evidence type="ECO:0000305" key="3"/>
<reference key="1">
    <citation type="journal article" date="2001" name="Biochim. Biophys. Acta">
        <title>cDNA cloning and expression of swine IL-7 from neonatal intestinal epithelium.</title>
        <authorList>
            <person name="Ueha S."/>
            <person name="Kitazawa H."/>
            <person name="Tomioka Y."/>
            <person name="Kawai Y."/>
            <person name="Saito T."/>
            <person name="Itoh T."/>
        </authorList>
    </citation>
    <scope>NUCLEOTIDE SEQUENCE [MRNA]</scope>
    <source>
        <tissue>Intestine</tissue>
    </source>
</reference>
<reference key="2">
    <citation type="journal article" date="2001" name="Cytogenet. Cell Genet.">
        <title>Genomic organization and assignment of the interleukin 7 gene (IL7) to porcine chromosome 4q11--&gt;q13 by FISH and by analysis of radiation hybrid panels.</title>
        <authorList>
            <person name="Uenishi H."/>
            <person name="Hiraiwa H."/>
            <person name="Sawazaki T."/>
            <person name="Kiuchi S."/>
            <person name="Yasue H."/>
        </authorList>
    </citation>
    <scope>NUCLEOTIDE SEQUENCE [GENOMIC DNA / MRNA]</scope>
    <source>
        <tissue>Spleen</tissue>
    </source>
</reference>
<reference key="3">
    <citation type="submission" date="2007-12" db="EMBL/GenBank/DDBJ databases">
        <title>U.S. veterinary immune reagent network: expressed swine gene sequences.</title>
        <authorList>
            <consortium name="U.S. Veterinary Immune Reagent Network"/>
            <person name="Boyd P."/>
            <person name="Tompkins D."/>
            <person name="Hudgens T."/>
            <person name="Baldwin C.L."/>
            <person name="Lunney J."/>
        </authorList>
    </citation>
    <scope>NUCLEOTIDE SEQUENCE [LARGE SCALE MRNA]</scope>
    <source>
        <tissue>Peripheral blood</tissue>
    </source>
</reference>
<gene>
    <name type="primary">IL7</name>
</gene>
<dbReference type="EMBL" id="AB035380">
    <property type="protein sequence ID" value="BAA96385.1"/>
    <property type="molecule type" value="mRNA"/>
</dbReference>
<dbReference type="EMBL" id="AB040441">
    <property type="protein sequence ID" value="BAB39170.1"/>
    <property type="molecule type" value="mRNA"/>
</dbReference>
<dbReference type="EMBL" id="AB049332">
    <property type="protein sequence ID" value="BAB39172.1"/>
    <property type="molecule type" value="Genomic_DNA"/>
</dbReference>
<dbReference type="EMBL" id="EU364895">
    <property type="protein sequence ID" value="ABY66141.1"/>
    <property type="molecule type" value="mRNA"/>
</dbReference>
<dbReference type="RefSeq" id="NP_999300.1">
    <property type="nucleotide sequence ID" value="NM_214135.2"/>
</dbReference>
<dbReference type="SMR" id="Q9N2G6"/>
<dbReference type="FunCoup" id="Q9N2G6">
    <property type="interactions" value="168"/>
</dbReference>
<dbReference type="STRING" id="9823.ENSSSCP00000064229"/>
<dbReference type="GlyCosmos" id="Q9N2G6">
    <property type="glycosylation" value="3 sites, No reported glycans"/>
</dbReference>
<dbReference type="GlyGen" id="Q9N2G6">
    <property type="glycosylation" value="3 sites"/>
</dbReference>
<dbReference type="PaxDb" id="9823-ENSSSCP00000006572"/>
<dbReference type="Ensembl" id="ENSSSCT00000097630.1">
    <property type="protein sequence ID" value="ENSSSCP00000079175.1"/>
    <property type="gene ID" value="ENSSSCG00000006161.6"/>
</dbReference>
<dbReference type="Ensembl" id="ENSSSCT00030065235.1">
    <property type="protein sequence ID" value="ENSSSCP00030029799.1"/>
    <property type="gene ID" value="ENSSSCG00030046702.1"/>
</dbReference>
<dbReference type="Ensembl" id="ENSSSCT00060017140.1">
    <property type="protein sequence ID" value="ENSSSCP00060006811.1"/>
    <property type="gene ID" value="ENSSSCG00060013039.1"/>
</dbReference>
<dbReference type="Ensembl" id="ENSSSCT00070034017.1">
    <property type="protein sequence ID" value="ENSSSCP00070028409.1"/>
    <property type="gene ID" value="ENSSSCG00070017230.1"/>
</dbReference>
<dbReference type="Ensembl" id="ENSSSCT00085018391">
    <property type="protein sequence ID" value="ENSSSCP00085012662"/>
    <property type="gene ID" value="ENSSSCG00085009854"/>
</dbReference>
<dbReference type="Ensembl" id="ENSSSCT00105001399">
    <property type="protein sequence ID" value="ENSSSCP00105000913"/>
    <property type="gene ID" value="ENSSSCG00105000778"/>
</dbReference>
<dbReference type="Ensembl" id="ENSSSCT00110000545">
    <property type="protein sequence ID" value="ENSSSCP00110000459"/>
    <property type="gene ID" value="ENSSSCG00110000268"/>
</dbReference>
<dbReference type="Ensembl" id="ENSSSCT00115033377">
    <property type="protein sequence ID" value="ENSSSCP00115031691"/>
    <property type="gene ID" value="ENSSSCG00115018825"/>
</dbReference>
<dbReference type="GeneID" id="397253"/>
<dbReference type="KEGG" id="ssc:397253"/>
<dbReference type="CTD" id="3574"/>
<dbReference type="VGNC" id="VGNC:98812">
    <property type="gene designation" value="IL7"/>
</dbReference>
<dbReference type="eggNOG" id="ENOG502SW6R">
    <property type="taxonomic scope" value="Eukaryota"/>
</dbReference>
<dbReference type="GeneTree" id="ENSGT00390000004451"/>
<dbReference type="HOGENOM" id="CLU_129929_1_0_1"/>
<dbReference type="InParanoid" id="Q9N2G6"/>
<dbReference type="OMA" id="NMSAEYR"/>
<dbReference type="OrthoDB" id="9829887at2759"/>
<dbReference type="TreeFam" id="TF338065"/>
<dbReference type="Reactome" id="R-SSC-1266695">
    <property type="pathway name" value="Interleukin-7 signaling"/>
</dbReference>
<dbReference type="Proteomes" id="UP000008227">
    <property type="component" value="Chromosome 4"/>
</dbReference>
<dbReference type="Proteomes" id="UP000314985">
    <property type="component" value="Chromosome 4"/>
</dbReference>
<dbReference type="Proteomes" id="UP000694570">
    <property type="component" value="Unplaced"/>
</dbReference>
<dbReference type="Proteomes" id="UP000694571">
    <property type="component" value="Unplaced"/>
</dbReference>
<dbReference type="Proteomes" id="UP000694720">
    <property type="component" value="Unplaced"/>
</dbReference>
<dbReference type="Proteomes" id="UP000694722">
    <property type="component" value="Unplaced"/>
</dbReference>
<dbReference type="Proteomes" id="UP000694723">
    <property type="component" value="Unplaced"/>
</dbReference>
<dbReference type="Proteomes" id="UP000694724">
    <property type="component" value="Unplaced"/>
</dbReference>
<dbReference type="Proteomes" id="UP000694725">
    <property type="component" value="Unplaced"/>
</dbReference>
<dbReference type="Proteomes" id="UP000694726">
    <property type="component" value="Unplaced"/>
</dbReference>
<dbReference type="Proteomes" id="UP000694727">
    <property type="component" value="Unplaced"/>
</dbReference>
<dbReference type="Proteomes" id="UP000694728">
    <property type="component" value="Unplaced"/>
</dbReference>
<dbReference type="GO" id="GO:0005615">
    <property type="term" value="C:extracellular space"/>
    <property type="evidence" value="ECO:0000318"/>
    <property type="project" value="GO_Central"/>
</dbReference>
<dbReference type="GO" id="GO:0005125">
    <property type="term" value="F:cytokine activity"/>
    <property type="evidence" value="ECO:0000318"/>
    <property type="project" value="GO_Central"/>
</dbReference>
<dbReference type="GO" id="GO:0008083">
    <property type="term" value="F:growth factor activity"/>
    <property type="evidence" value="ECO:0007669"/>
    <property type="project" value="UniProtKB-KW"/>
</dbReference>
<dbReference type="GO" id="GO:0005139">
    <property type="term" value="F:interleukin-7 receptor binding"/>
    <property type="evidence" value="ECO:0007669"/>
    <property type="project" value="InterPro"/>
</dbReference>
<dbReference type="GO" id="GO:0042100">
    <property type="term" value="P:B cell proliferation"/>
    <property type="evidence" value="ECO:0007669"/>
    <property type="project" value="Ensembl"/>
</dbReference>
<dbReference type="GO" id="GO:0045453">
    <property type="term" value="P:bone resorption"/>
    <property type="evidence" value="ECO:0007669"/>
    <property type="project" value="Ensembl"/>
</dbReference>
<dbReference type="GO" id="GO:0097191">
    <property type="term" value="P:extrinsic apoptotic signaling pathway"/>
    <property type="evidence" value="ECO:0007669"/>
    <property type="project" value="Ensembl"/>
</dbReference>
<dbReference type="GO" id="GO:0048873">
    <property type="term" value="P:homeostasis of number of cells within a tissue"/>
    <property type="evidence" value="ECO:0007669"/>
    <property type="project" value="Ensembl"/>
</dbReference>
<dbReference type="GO" id="GO:0006955">
    <property type="term" value="P:immune response"/>
    <property type="evidence" value="ECO:0007669"/>
    <property type="project" value="InterPro"/>
</dbReference>
<dbReference type="GO" id="GO:0038111">
    <property type="term" value="P:interleukin-7-mediated signaling pathway"/>
    <property type="evidence" value="ECO:0000318"/>
    <property type="project" value="GO_Central"/>
</dbReference>
<dbReference type="GO" id="GO:2001240">
    <property type="term" value="P:negative regulation of extrinsic apoptotic signaling pathway in absence of ligand"/>
    <property type="evidence" value="ECO:0007669"/>
    <property type="project" value="Ensembl"/>
</dbReference>
<dbReference type="GO" id="GO:0035265">
    <property type="term" value="P:organ growth"/>
    <property type="evidence" value="ECO:0007669"/>
    <property type="project" value="Ensembl"/>
</dbReference>
<dbReference type="GO" id="GO:0045579">
    <property type="term" value="P:positive regulation of B cell differentiation"/>
    <property type="evidence" value="ECO:0007669"/>
    <property type="project" value="Ensembl"/>
</dbReference>
<dbReference type="GO" id="GO:0030890">
    <property type="term" value="P:positive regulation of B cell proliferation"/>
    <property type="evidence" value="ECO:0007669"/>
    <property type="project" value="Ensembl"/>
</dbReference>
<dbReference type="GO" id="GO:0032722">
    <property type="term" value="P:positive regulation of chemokine production"/>
    <property type="evidence" value="ECO:0007669"/>
    <property type="project" value="Ensembl"/>
</dbReference>
<dbReference type="GO" id="GO:0001961">
    <property type="term" value="P:positive regulation of cytokine-mediated signaling pathway"/>
    <property type="evidence" value="ECO:0007669"/>
    <property type="project" value="Ensembl"/>
</dbReference>
<dbReference type="GO" id="GO:0046622">
    <property type="term" value="P:positive regulation of organ growth"/>
    <property type="evidence" value="ECO:0007669"/>
    <property type="project" value="Ensembl"/>
</dbReference>
<dbReference type="GO" id="GO:0045582">
    <property type="term" value="P:positive regulation of T cell differentiation"/>
    <property type="evidence" value="ECO:0007669"/>
    <property type="project" value="Ensembl"/>
</dbReference>
<dbReference type="GO" id="GO:0002360">
    <property type="term" value="P:T cell lineage commitment"/>
    <property type="evidence" value="ECO:0007669"/>
    <property type="project" value="Ensembl"/>
</dbReference>
<dbReference type="FunFam" id="1.20.1250.50:FF:000001">
    <property type="entry name" value="Interleukin-7"/>
    <property type="match status" value="1"/>
</dbReference>
<dbReference type="Gene3D" id="1.20.1250.50">
    <property type="match status" value="1"/>
</dbReference>
<dbReference type="InterPro" id="IPR001181">
    <property type="entry name" value="IL-7"/>
</dbReference>
<dbReference type="InterPro" id="IPR038325">
    <property type="entry name" value="IL7_sf"/>
</dbReference>
<dbReference type="PANTHER" id="PTHR48492">
    <property type="entry name" value="INTERLEUKIN-7"/>
    <property type="match status" value="1"/>
</dbReference>
<dbReference type="PANTHER" id="PTHR48492:SF1">
    <property type="entry name" value="INTERLEUKIN-7"/>
    <property type="match status" value="1"/>
</dbReference>
<dbReference type="Pfam" id="PF01415">
    <property type="entry name" value="IL7"/>
    <property type="match status" value="1"/>
</dbReference>
<dbReference type="PIRSF" id="PIRSF001942">
    <property type="entry name" value="IL-7"/>
    <property type="match status" value="1"/>
</dbReference>
<dbReference type="PRINTS" id="PR00435">
    <property type="entry name" value="INTERLEUKIN7"/>
</dbReference>
<dbReference type="SMART" id="SM00127">
    <property type="entry name" value="IL7"/>
    <property type="match status" value="1"/>
</dbReference>
<proteinExistence type="evidence at transcript level"/>
<keyword id="KW-0202">Cytokine</keyword>
<keyword id="KW-1015">Disulfide bond</keyword>
<keyword id="KW-0325">Glycoprotein</keyword>
<keyword id="KW-0339">Growth factor</keyword>
<keyword id="KW-1185">Reference proteome</keyword>
<keyword id="KW-0964">Secreted</keyword>
<keyword id="KW-0732">Signal</keyword>